<comment type="function">
    <text>Probable transcription factor that binds to the DNA sequence 5'-GC[TA][AC]ATTA[GA]-3'. Activates the transcription of the GHRH gene. Plays an important role in pituitary development.</text>
</comment>
<comment type="interaction">
    <interactant intactId="EBI-18011701">
        <id>Q9H4S2</id>
    </interactant>
    <interactant intactId="EBI-10241353">
        <id>Q3SYF9</id>
        <label>KRTAP19-7</label>
    </interactant>
    <organismsDiffer>false</organismsDiffer>
    <experiments>3</experiments>
</comment>
<comment type="subcellular location">
    <subcellularLocation>
        <location evidence="2">Nucleus</location>
    </subcellularLocation>
</comment>
<comment type="similarity">
    <text evidence="4">Belongs to the Antp homeobox family.</text>
</comment>
<evidence type="ECO:0000250" key="1"/>
<evidence type="ECO:0000255" key="2">
    <source>
        <dbReference type="PROSITE-ProRule" id="PRU00108"/>
    </source>
</evidence>
<evidence type="ECO:0000256" key="3">
    <source>
        <dbReference type="SAM" id="MobiDB-lite"/>
    </source>
</evidence>
<evidence type="ECO:0000305" key="4"/>
<organism>
    <name type="scientific">Homo sapiens</name>
    <name type="common">Human</name>
    <dbReference type="NCBI Taxonomy" id="9606"/>
    <lineage>
        <taxon>Eukaryota</taxon>
        <taxon>Metazoa</taxon>
        <taxon>Chordata</taxon>
        <taxon>Craniata</taxon>
        <taxon>Vertebrata</taxon>
        <taxon>Euteleostomi</taxon>
        <taxon>Mammalia</taxon>
        <taxon>Eutheria</taxon>
        <taxon>Euarchontoglires</taxon>
        <taxon>Primates</taxon>
        <taxon>Haplorrhini</taxon>
        <taxon>Catarrhini</taxon>
        <taxon>Hominidae</taxon>
        <taxon>Homo</taxon>
    </lineage>
</organism>
<accession>Q9H4S2</accession>
<accession>Q9UD62</accession>
<protein>
    <recommendedName>
        <fullName>GS homeobox 1</fullName>
    </recommendedName>
    <alternativeName>
        <fullName>Homeobox protein GSH-1</fullName>
    </alternativeName>
</protein>
<dbReference type="EMBL" id="AB044157">
    <property type="protein sequence ID" value="BAB78692.1"/>
    <property type="molecule type" value="mRNA"/>
</dbReference>
<dbReference type="EMBL" id="AB044158">
    <property type="protein sequence ID" value="BAB78693.1"/>
    <property type="molecule type" value="Genomic_DNA"/>
</dbReference>
<dbReference type="EMBL" id="AL390738">
    <property type="status" value="NOT_ANNOTATED_CDS"/>
    <property type="molecule type" value="Genomic_DNA"/>
</dbReference>
<dbReference type="CCDS" id="CCDS9326.1"/>
<dbReference type="RefSeq" id="NP_663632.1">
    <property type="nucleotide sequence ID" value="NM_145657.3"/>
</dbReference>
<dbReference type="SMR" id="Q9H4S2"/>
<dbReference type="BioGRID" id="128527">
    <property type="interactions" value="52"/>
</dbReference>
<dbReference type="FunCoup" id="Q9H4S2">
    <property type="interactions" value="412"/>
</dbReference>
<dbReference type="IntAct" id="Q9H4S2">
    <property type="interactions" value="46"/>
</dbReference>
<dbReference type="STRING" id="9606.ENSP00000304331"/>
<dbReference type="GlyCosmos" id="Q9H4S2">
    <property type="glycosylation" value="1 site, 1 glycan"/>
</dbReference>
<dbReference type="GlyGen" id="Q9H4S2">
    <property type="glycosylation" value="1 site, 1 O-linked glycan (1 site)"/>
</dbReference>
<dbReference type="iPTMnet" id="Q9H4S2"/>
<dbReference type="PhosphoSitePlus" id="Q9H4S2"/>
<dbReference type="BioMuta" id="GSX1"/>
<dbReference type="DMDM" id="27923786"/>
<dbReference type="MassIVE" id="Q9H4S2"/>
<dbReference type="PaxDb" id="9606-ENSP00000304331"/>
<dbReference type="PeptideAtlas" id="Q9H4S2"/>
<dbReference type="Antibodypedia" id="22686">
    <property type="antibodies" value="71 antibodies from 17 providers"/>
</dbReference>
<dbReference type="DNASU" id="219409"/>
<dbReference type="Ensembl" id="ENST00000302945.3">
    <property type="protein sequence ID" value="ENSP00000304331.2"/>
    <property type="gene ID" value="ENSG00000169840.5"/>
</dbReference>
<dbReference type="GeneID" id="219409"/>
<dbReference type="KEGG" id="hsa:219409"/>
<dbReference type="MANE-Select" id="ENST00000302945.3">
    <property type="protein sequence ID" value="ENSP00000304331.2"/>
    <property type="RefSeq nucleotide sequence ID" value="NM_145657.3"/>
    <property type="RefSeq protein sequence ID" value="NP_663632.1"/>
</dbReference>
<dbReference type="UCSC" id="uc001urr.2">
    <property type="organism name" value="human"/>
</dbReference>
<dbReference type="AGR" id="HGNC:20374"/>
<dbReference type="CTD" id="219409"/>
<dbReference type="DisGeNET" id="219409"/>
<dbReference type="GeneCards" id="GSX1"/>
<dbReference type="HGNC" id="HGNC:20374">
    <property type="gene designation" value="GSX1"/>
</dbReference>
<dbReference type="HPA" id="ENSG00000169840">
    <property type="expression patterns" value="Tissue enriched (brain)"/>
</dbReference>
<dbReference type="MIM" id="616542">
    <property type="type" value="gene"/>
</dbReference>
<dbReference type="neXtProt" id="NX_Q9H4S2"/>
<dbReference type="OpenTargets" id="ENSG00000169840"/>
<dbReference type="PharmGKB" id="PA162390373"/>
<dbReference type="VEuPathDB" id="HostDB:ENSG00000169840"/>
<dbReference type="eggNOG" id="KOG0489">
    <property type="taxonomic scope" value="Eukaryota"/>
</dbReference>
<dbReference type="GeneTree" id="ENSGT00940000154361"/>
<dbReference type="HOGENOM" id="CLU_077153_0_0_1"/>
<dbReference type="InParanoid" id="Q9H4S2"/>
<dbReference type="OMA" id="FGSQYCP"/>
<dbReference type="OrthoDB" id="6159439at2759"/>
<dbReference type="PAN-GO" id="Q9H4S2">
    <property type="GO annotations" value="6 GO annotations based on evolutionary models"/>
</dbReference>
<dbReference type="PhylomeDB" id="Q9H4S2"/>
<dbReference type="TreeFam" id="TF315938"/>
<dbReference type="PathwayCommons" id="Q9H4S2"/>
<dbReference type="SignaLink" id="Q9H4S2"/>
<dbReference type="BioGRID-ORCS" id="219409">
    <property type="hits" value="12 hits in 1162 CRISPR screens"/>
</dbReference>
<dbReference type="GenomeRNAi" id="219409"/>
<dbReference type="Pharos" id="Q9H4S2">
    <property type="development level" value="Tbio"/>
</dbReference>
<dbReference type="PRO" id="PR:Q9H4S2"/>
<dbReference type="Proteomes" id="UP000005640">
    <property type="component" value="Chromosome 13"/>
</dbReference>
<dbReference type="RNAct" id="Q9H4S2">
    <property type="molecule type" value="protein"/>
</dbReference>
<dbReference type="Bgee" id="ENSG00000169840">
    <property type="expression patterns" value="Expressed in hypothalamus and 11 other cell types or tissues"/>
</dbReference>
<dbReference type="GO" id="GO:0000785">
    <property type="term" value="C:chromatin"/>
    <property type="evidence" value="ECO:0000247"/>
    <property type="project" value="NTNU_SB"/>
</dbReference>
<dbReference type="GO" id="GO:0005634">
    <property type="term" value="C:nucleus"/>
    <property type="evidence" value="ECO:0000318"/>
    <property type="project" value="GO_Central"/>
</dbReference>
<dbReference type="GO" id="GO:0001228">
    <property type="term" value="F:DNA-binding transcription activator activity, RNA polymerase II-specific"/>
    <property type="evidence" value="ECO:0007669"/>
    <property type="project" value="Ensembl"/>
</dbReference>
<dbReference type="GO" id="GO:0000981">
    <property type="term" value="F:DNA-binding transcription factor activity, RNA polymerase II-specific"/>
    <property type="evidence" value="ECO:0000247"/>
    <property type="project" value="NTNU_SB"/>
</dbReference>
<dbReference type="GO" id="GO:0000978">
    <property type="term" value="F:RNA polymerase II cis-regulatory region sequence-specific DNA binding"/>
    <property type="evidence" value="ECO:0000318"/>
    <property type="project" value="GO_Central"/>
</dbReference>
<dbReference type="GO" id="GO:0043565">
    <property type="term" value="F:sequence-specific DNA binding"/>
    <property type="evidence" value="ECO:0000314"/>
    <property type="project" value="MGI"/>
</dbReference>
<dbReference type="GO" id="GO:1990837">
    <property type="term" value="F:sequence-specific double-stranded DNA binding"/>
    <property type="evidence" value="ECO:0000314"/>
    <property type="project" value="ARUK-UCL"/>
</dbReference>
<dbReference type="GO" id="GO:0021984">
    <property type="term" value="P:adenohypophysis development"/>
    <property type="evidence" value="ECO:0007669"/>
    <property type="project" value="Ensembl"/>
</dbReference>
<dbReference type="GO" id="GO:0007420">
    <property type="term" value="P:brain development"/>
    <property type="evidence" value="ECO:0000318"/>
    <property type="project" value="GO_Central"/>
</dbReference>
<dbReference type="GO" id="GO:0007417">
    <property type="term" value="P:central nervous system development"/>
    <property type="evidence" value="ECO:0000318"/>
    <property type="project" value="GO_Central"/>
</dbReference>
<dbReference type="GO" id="GO:0021854">
    <property type="term" value="P:hypothalamus development"/>
    <property type="evidence" value="ECO:0007669"/>
    <property type="project" value="Ensembl"/>
</dbReference>
<dbReference type="GO" id="GO:0030182">
    <property type="term" value="P:neuron differentiation"/>
    <property type="evidence" value="ECO:0000318"/>
    <property type="project" value="GO_Central"/>
</dbReference>
<dbReference type="GO" id="GO:0048663">
    <property type="term" value="P:neuron fate commitment"/>
    <property type="evidence" value="ECO:0007669"/>
    <property type="project" value="Ensembl"/>
</dbReference>
<dbReference type="GO" id="GO:0045944">
    <property type="term" value="P:positive regulation of transcription by RNA polymerase II"/>
    <property type="evidence" value="ECO:0000314"/>
    <property type="project" value="MGI"/>
</dbReference>
<dbReference type="GO" id="GO:0021527">
    <property type="term" value="P:spinal cord association neuron differentiation"/>
    <property type="evidence" value="ECO:0007669"/>
    <property type="project" value="Ensembl"/>
</dbReference>
<dbReference type="GO" id="GO:0006366">
    <property type="term" value="P:transcription by RNA polymerase II"/>
    <property type="evidence" value="ECO:0007669"/>
    <property type="project" value="Ensembl"/>
</dbReference>
<dbReference type="CDD" id="cd00086">
    <property type="entry name" value="homeodomain"/>
    <property type="match status" value="1"/>
</dbReference>
<dbReference type="FunFam" id="1.10.10.60:FF:000147">
    <property type="entry name" value="GS homeobox 2"/>
    <property type="match status" value="1"/>
</dbReference>
<dbReference type="Gene3D" id="1.10.10.60">
    <property type="entry name" value="Homeodomain-like"/>
    <property type="match status" value="1"/>
</dbReference>
<dbReference type="InterPro" id="IPR042191">
    <property type="entry name" value="GSH1/2"/>
</dbReference>
<dbReference type="InterPro" id="IPR001356">
    <property type="entry name" value="HD"/>
</dbReference>
<dbReference type="InterPro" id="IPR020479">
    <property type="entry name" value="HD_metazoa"/>
</dbReference>
<dbReference type="InterPro" id="IPR017970">
    <property type="entry name" value="Homeobox_CS"/>
</dbReference>
<dbReference type="InterPro" id="IPR009057">
    <property type="entry name" value="Homeodomain-like_sf"/>
</dbReference>
<dbReference type="PANTHER" id="PTHR47421:SF2">
    <property type="entry name" value="GS HOMEOBOX 1"/>
    <property type="match status" value="1"/>
</dbReference>
<dbReference type="PANTHER" id="PTHR47421">
    <property type="entry name" value="GS HOMEOBOX 2"/>
    <property type="match status" value="1"/>
</dbReference>
<dbReference type="Pfam" id="PF00046">
    <property type="entry name" value="Homeodomain"/>
    <property type="match status" value="1"/>
</dbReference>
<dbReference type="PRINTS" id="PR00024">
    <property type="entry name" value="HOMEOBOX"/>
</dbReference>
<dbReference type="SMART" id="SM00389">
    <property type="entry name" value="HOX"/>
    <property type="match status" value="1"/>
</dbReference>
<dbReference type="SUPFAM" id="SSF46689">
    <property type="entry name" value="Homeodomain-like"/>
    <property type="match status" value="1"/>
</dbReference>
<dbReference type="PROSITE" id="PS00027">
    <property type="entry name" value="HOMEOBOX_1"/>
    <property type="match status" value="1"/>
</dbReference>
<dbReference type="PROSITE" id="PS50071">
    <property type="entry name" value="HOMEOBOX_2"/>
    <property type="match status" value="1"/>
</dbReference>
<keyword id="KW-0010">Activator</keyword>
<keyword id="KW-0217">Developmental protein</keyword>
<keyword id="KW-0238">DNA-binding</keyword>
<keyword id="KW-0371">Homeobox</keyword>
<keyword id="KW-0539">Nucleus</keyword>
<keyword id="KW-1185">Reference proteome</keyword>
<keyword id="KW-0804">Transcription</keyword>
<keyword id="KW-0805">Transcription regulation</keyword>
<proteinExistence type="evidence at protein level"/>
<feature type="chain" id="PRO_0000048894" description="GS homeobox 1">
    <location>
        <begin position="1"/>
        <end position="264"/>
    </location>
</feature>
<feature type="DNA-binding region" description="Homeobox" evidence="2">
    <location>
        <begin position="147"/>
        <end position="206"/>
    </location>
</feature>
<feature type="region of interest" description="SNAG domain" evidence="1">
    <location>
        <begin position="1"/>
        <end position="20"/>
    </location>
</feature>
<feature type="region of interest" description="Disordered" evidence="3">
    <location>
        <begin position="201"/>
        <end position="264"/>
    </location>
</feature>
<feature type="compositionally biased region" description="Gly residues" evidence="3">
    <location>
        <begin position="211"/>
        <end position="225"/>
    </location>
</feature>
<feature type="compositionally biased region" description="Low complexity" evidence="3">
    <location>
        <begin position="229"/>
        <end position="238"/>
    </location>
</feature>
<feature type="compositionally biased region" description="Basic and acidic residues" evidence="3">
    <location>
        <begin position="254"/>
        <end position="264"/>
    </location>
</feature>
<sequence>MPRSFLVDSLVLREAGEKKAPEGSPPPLFPYAVPPPHALHGLSPGACHARKAGLLCVCPLCVTASQLHGPPGPPALPLLKASFPPFGSQYCHAPLGRQHSAVSPGVAHGPAAAAAAAALYQTSYPLPDPRQFHCISVDSSSNQLPSSKRMRTAFTSTQLLELEREFASNMYLSRLRRIEIATYLNLSEKQVKIWFQNRRVKHKKEGKGSNHRGGGGGGAGGGGSAPQGCKCASLSSAKCSEDDDELPMSPSSSGKDDRDLTVTP</sequence>
<name>GSX1_HUMAN</name>
<reference key="1">
    <citation type="journal article" date="2001" name="Mol. Endocrinol.">
        <title>Homeobox protein Gsh-1-dependent regulation of the rat GHRH gene promoter.</title>
        <authorList>
            <person name="Mutsuga N."/>
            <person name="Iwasaki Y."/>
            <person name="Morishita M."/>
            <person name="Nomura A."/>
            <person name="Yamamori E."/>
            <person name="Yoshida M."/>
            <person name="Asai M."/>
            <person name="Ozaki N."/>
            <person name="Kambe F."/>
            <person name="Seo H."/>
            <person name="Oiso Y."/>
            <person name="Saito H."/>
        </authorList>
    </citation>
    <scope>NUCLEOTIDE SEQUENCE [GENOMIC DNA / MRNA]</scope>
</reference>
<reference key="2">
    <citation type="journal article" date="2004" name="Nature">
        <title>The DNA sequence and analysis of human chromosome 13.</title>
        <authorList>
            <person name="Dunham A."/>
            <person name="Matthews L.H."/>
            <person name="Burton J."/>
            <person name="Ashurst J.L."/>
            <person name="Howe K.L."/>
            <person name="Ashcroft K.J."/>
            <person name="Beare D.M."/>
            <person name="Burford D.C."/>
            <person name="Hunt S.E."/>
            <person name="Griffiths-Jones S."/>
            <person name="Jones M.C."/>
            <person name="Keenan S.J."/>
            <person name="Oliver K."/>
            <person name="Scott C.E."/>
            <person name="Ainscough R."/>
            <person name="Almeida J.P."/>
            <person name="Ambrose K.D."/>
            <person name="Andrews D.T."/>
            <person name="Ashwell R.I.S."/>
            <person name="Babbage A.K."/>
            <person name="Bagguley C.L."/>
            <person name="Bailey J."/>
            <person name="Bannerjee R."/>
            <person name="Barlow K.F."/>
            <person name="Bates K."/>
            <person name="Beasley H."/>
            <person name="Bird C.P."/>
            <person name="Bray-Allen S."/>
            <person name="Brown A.J."/>
            <person name="Brown J.Y."/>
            <person name="Burrill W."/>
            <person name="Carder C."/>
            <person name="Carter N.P."/>
            <person name="Chapman J.C."/>
            <person name="Clamp M.E."/>
            <person name="Clark S.Y."/>
            <person name="Clarke G."/>
            <person name="Clee C.M."/>
            <person name="Clegg S.C."/>
            <person name="Cobley V."/>
            <person name="Collins J.E."/>
            <person name="Corby N."/>
            <person name="Coville G.J."/>
            <person name="Deloukas P."/>
            <person name="Dhami P."/>
            <person name="Dunham I."/>
            <person name="Dunn M."/>
            <person name="Earthrowl M.E."/>
            <person name="Ellington A.G."/>
            <person name="Faulkner L."/>
            <person name="Frankish A.G."/>
            <person name="Frankland J."/>
            <person name="French L."/>
            <person name="Garner P."/>
            <person name="Garnett J."/>
            <person name="Gilbert J.G.R."/>
            <person name="Gilson C.J."/>
            <person name="Ghori J."/>
            <person name="Grafham D.V."/>
            <person name="Gribble S.M."/>
            <person name="Griffiths C."/>
            <person name="Hall R.E."/>
            <person name="Hammond S."/>
            <person name="Harley J.L."/>
            <person name="Hart E.A."/>
            <person name="Heath P.D."/>
            <person name="Howden P.J."/>
            <person name="Huckle E.J."/>
            <person name="Hunt P.J."/>
            <person name="Hunt A.R."/>
            <person name="Johnson C."/>
            <person name="Johnson D."/>
            <person name="Kay M."/>
            <person name="Kimberley A.M."/>
            <person name="King A."/>
            <person name="Laird G.K."/>
            <person name="Langford C.J."/>
            <person name="Lawlor S."/>
            <person name="Leongamornlert D.A."/>
            <person name="Lloyd D.M."/>
            <person name="Lloyd C."/>
            <person name="Loveland J.E."/>
            <person name="Lovell J."/>
            <person name="Martin S."/>
            <person name="Mashreghi-Mohammadi M."/>
            <person name="McLaren S.J."/>
            <person name="McMurray A."/>
            <person name="Milne S."/>
            <person name="Moore M.J.F."/>
            <person name="Nickerson T."/>
            <person name="Palmer S.A."/>
            <person name="Pearce A.V."/>
            <person name="Peck A.I."/>
            <person name="Pelan S."/>
            <person name="Phillimore B."/>
            <person name="Porter K.M."/>
            <person name="Rice C.M."/>
            <person name="Searle S."/>
            <person name="Sehra H.K."/>
            <person name="Shownkeen R."/>
            <person name="Skuce C.D."/>
            <person name="Smith M."/>
            <person name="Steward C.A."/>
            <person name="Sycamore N."/>
            <person name="Tester J."/>
            <person name="Thomas D.W."/>
            <person name="Tracey A."/>
            <person name="Tromans A."/>
            <person name="Tubby B."/>
            <person name="Wall M."/>
            <person name="Wallis J.M."/>
            <person name="West A.P."/>
            <person name="Whitehead S.L."/>
            <person name="Willey D.L."/>
            <person name="Wilming L."/>
            <person name="Wray P.W."/>
            <person name="Wright M.W."/>
            <person name="Young L."/>
            <person name="Coulson A."/>
            <person name="Durbin R.M."/>
            <person name="Hubbard T."/>
            <person name="Sulston J.E."/>
            <person name="Beck S."/>
            <person name="Bentley D.R."/>
            <person name="Rogers J."/>
            <person name="Ross M.T."/>
        </authorList>
    </citation>
    <scope>NUCLEOTIDE SEQUENCE [LARGE SCALE GENOMIC DNA]</scope>
</reference>
<reference key="3">
    <citation type="journal article" date="1994" name="Gene">
        <title>Identification of homeobox genes expressed in human haemopoietic progenitor cells.</title>
        <authorList>
            <person name="Moretti P."/>
            <person name="Simmons P."/>
            <person name="Thomas P."/>
            <person name="Haylock D."/>
            <person name="Rathjen P."/>
            <person name="Vadas M."/>
            <person name="D'Andrea R."/>
        </authorList>
    </citation>
    <scope>NUCLEOTIDE SEQUENCE [MRNA] OF 155-193</scope>
    <source>
        <tissue>Bone marrow</tissue>
    </source>
</reference>
<gene>
    <name type="primary">GSX1</name>
    <name type="synonym">GSH1</name>
</gene>